<keyword id="KW-0878">Amphibian defense peptide</keyword>
<keyword id="KW-0044">Antibiotic</keyword>
<keyword id="KW-0929">Antimicrobial</keyword>
<keyword id="KW-0165">Cleavage on pair of basic residues</keyword>
<keyword id="KW-1015">Disulfide bond</keyword>
<keyword id="KW-0964">Secreted</keyword>
<keyword id="KW-0732">Signal</keyword>
<dbReference type="EMBL" id="AM113508">
    <property type="protein sequence ID" value="CAJ34604.1"/>
    <property type="molecule type" value="mRNA"/>
</dbReference>
<dbReference type="GO" id="GO:0005576">
    <property type="term" value="C:extracellular region"/>
    <property type="evidence" value="ECO:0007669"/>
    <property type="project" value="UniProtKB-SubCell"/>
</dbReference>
<dbReference type="GO" id="GO:0050829">
    <property type="term" value="P:defense response to Gram-negative bacterium"/>
    <property type="evidence" value="ECO:0007669"/>
    <property type="project" value="UniProtKB-ARBA"/>
</dbReference>
<dbReference type="GO" id="GO:0050830">
    <property type="term" value="P:defense response to Gram-positive bacterium"/>
    <property type="evidence" value="ECO:0007669"/>
    <property type="project" value="UniProtKB-ARBA"/>
</dbReference>
<dbReference type="InterPro" id="IPR012520">
    <property type="entry name" value="Antimicrobial_frog_1"/>
</dbReference>
<dbReference type="InterPro" id="IPR004275">
    <property type="entry name" value="Frog_antimicrobial_propeptide"/>
</dbReference>
<dbReference type="Pfam" id="PF08018">
    <property type="entry name" value="Antimicrobial_1"/>
    <property type="match status" value="1"/>
</dbReference>
<dbReference type="Pfam" id="PF03032">
    <property type="entry name" value="FSAP_sig_propep"/>
    <property type="match status" value="1"/>
</dbReference>
<accession>Q1JS93</accession>
<reference key="1">
    <citation type="journal article" date="2006" name="Peptides">
        <title>The Chinese bamboo leaf odorous frog (Rana (odorrana) versabilis) and north american rana frogs share the same families of skin antimicrobial peptides.</title>
        <authorList>
            <person name="Chen T."/>
            <person name="Zhou M."/>
            <person name="Rao P."/>
            <person name="Walker B."/>
            <person name="Shaw C."/>
        </authorList>
    </citation>
    <scope>NUCLEOTIDE SEQUENCE [MRNA]</scope>
    <scope>MASS SPECTROMETRY</scope>
    <source>
        <tissue>Skin secretion</tissue>
    </source>
</reference>
<comment type="function">
    <text evidence="1">Antimicrobial peptide.</text>
</comment>
<comment type="subcellular location">
    <subcellularLocation>
        <location>Secreted</location>
    </subcellularLocation>
</comment>
<comment type="tissue specificity">
    <text>Expressed by the skin glands.</text>
</comment>
<comment type="mass spectrometry" mass="2591.0" method="MALDI" evidence="3"/>
<comment type="similarity">
    <text evidence="4">Belongs to the frog skin active peptide (FSAP) family. Brevinin subfamily.</text>
</comment>
<name>BR1B_ODOVE</name>
<evidence type="ECO:0000250" key="1"/>
<evidence type="ECO:0000255" key="2"/>
<evidence type="ECO:0000269" key="3">
    <source>
    </source>
</evidence>
<evidence type="ECO:0000305" key="4"/>
<sequence length="70" mass="8092">MFTLKKSLLLLFFLGTINLSLCEEERNAEEERRDEPDEMNVEVEKRFLPLIAGLAANFLPKIFCAITKKC</sequence>
<organism>
    <name type="scientific">Odorrana versabilis</name>
    <name type="common">Chinese bamboo leaf odorous frog</name>
    <name type="synonym">Rana versabilis</name>
    <dbReference type="NCBI Taxonomy" id="326940"/>
    <lineage>
        <taxon>Eukaryota</taxon>
        <taxon>Metazoa</taxon>
        <taxon>Chordata</taxon>
        <taxon>Craniata</taxon>
        <taxon>Vertebrata</taxon>
        <taxon>Euteleostomi</taxon>
        <taxon>Amphibia</taxon>
        <taxon>Batrachia</taxon>
        <taxon>Anura</taxon>
        <taxon>Neobatrachia</taxon>
        <taxon>Ranoidea</taxon>
        <taxon>Ranidae</taxon>
        <taxon>Odorrana</taxon>
    </lineage>
</organism>
<proteinExistence type="evidence at protein level"/>
<feature type="signal peptide" evidence="2">
    <location>
        <begin position="1"/>
        <end position="22"/>
    </location>
</feature>
<feature type="propeptide" id="PRO_0000268209">
    <location>
        <begin position="23"/>
        <end position="44"/>
    </location>
</feature>
<feature type="peptide" id="PRO_0000268210" description="Brevinin-1Vb">
    <location>
        <begin position="47"/>
        <end position="70"/>
    </location>
</feature>
<feature type="disulfide bond">
    <location>
        <begin position="64"/>
        <end position="70"/>
    </location>
</feature>
<protein>
    <recommendedName>
        <fullName>Brevinin-1Vb</fullName>
        <shortName>brevIVB</shortName>
    </recommendedName>
    <alternativeName>
        <fullName>1VEb</fullName>
    </alternativeName>
</protein>